<proteinExistence type="evidence at transcript level"/>
<protein>
    <recommendedName>
        <fullName>Heat shock protein 105 kDa</fullName>
    </recommendedName>
    <alternativeName>
        <fullName>Heat shock 110 kDa protein</fullName>
    </alternativeName>
</protein>
<keyword id="KW-0007">Acetylation</keyword>
<keyword id="KW-0067">ATP-binding</keyword>
<keyword id="KW-0963">Cytoplasm</keyword>
<keyword id="KW-0547">Nucleotide-binding</keyword>
<keyword id="KW-0597">Phosphoprotein</keyword>
<keyword id="KW-0346">Stress response</keyword>
<comment type="function">
    <text evidence="1 2 4">Acts as a nucleotide-exchange factor (NEF) for chaperone proteins HSPA1A and HSPA1B, promoting the release of ADP from HSPA1A/B thereby triggering substrate release (By similarity). Prevents the aggregation of denatured proteins in cells under severe stress, on which the ATP levels decrease markedly (PubMed:9395504). Inhibits HSPA8/HSC70 ATPase and chaperone activities (By similarity).</text>
</comment>
<comment type="subunit">
    <text evidence="1 2">Interacts with HSPA8/HSC70. Interacts with HSPA1A (via NBD) and HSPA1B (via NBD).</text>
</comment>
<comment type="subcellular location">
    <subcellularLocation>
        <location evidence="2">Cytoplasm</location>
    </subcellularLocation>
</comment>
<comment type="tissue specificity">
    <text>Predominantly expressed in the brain and also found in the liver.</text>
</comment>
<comment type="PTM">
    <text evidence="1">Phosphorylation on Ser-509 may be important for regulation of the HSPA8/HSC70 chaperone activity.</text>
</comment>
<comment type="similarity">
    <text evidence="5">Belongs to the heat shock protein 70 family.</text>
</comment>
<accession>Q60446</accession>
<feature type="initiator methionine" description="Removed" evidence="2">
    <location>
        <position position="1"/>
    </location>
</feature>
<feature type="chain" id="PRO_0000078283" description="Heat shock protein 105 kDa">
    <location>
        <begin position="2"/>
        <end position="858"/>
    </location>
</feature>
<feature type="region of interest" description="Disordered" evidence="3">
    <location>
        <begin position="500"/>
        <end position="585"/>
    </location>
</feature>
<feature type="region of interest" description="Disordered" evidence="3">
    <location>
        <begin position="801"/>
        <end position="858"/>
    </location>
</feature>
<feature type="compositionally biased region" description="Acidic residues" evidence="3">
    <location>
        <begin position="504"/>
        <end position="515"/>
    </location>
</feature>
<feature type="compositionally biased region" description="Polar residues" evidence="3">
    <location>
        <begin position="533"/>
        <end position="549"/>
    </location>
</feature>
<feature type="compositionally biased region" description="Basic and acidic residues" evidence="3">
    <location>
        <begin position="564"/>
        <end position="585"/>
    </location>
</feature>
<feature type="compositionally biased region" description="Basic and acidic residues" evidence="3">
    <location>
        <begin position="806"/>
        <end position="815"/>
    </location>
</feature>
<feature type="compositionally biased region" description="Basic and acidic residues" evidence="3">
    <location>
        <begin position="822"/>
        <end position="834"/>
    </location>
</feature>
<feature type="modified residue" description="N-acetylserine" evidence="2">
    <location>
        <position position="2"/>
    </location>
</feature>
<feature type="modified residue" description="N6-acetyllysine" evidence="1">
    <location>
        <position position="471"/>
    </location>
</feature>
<feature type="modified residue" description="Phosphoserine" evidence="1">
    <location>
        <position position="509"/>
    </location>
</feature>
<feature type="modified residue" description="Phosphoserine" evidence="1">
    <location>
        <position position="510"/>
    </location>
</feature>
<feature type="modified residue" description="Phosphoserine" evidence="2">
    <location>
        <position position="558"/>
    </location>
</feature>
<feature type="modified residue" description="Phosphoserine" evidence="2">
    <location>
        <position position="810"/>
    </location>
</feature>
<feature type="modified residue" description="Phosphothreonine" evidence="2">
    <location>
        <position position="816"/>
    </location>
</feature>
<name>HS105_CRIGR</name>
<evidence type="ECO:0000250" key="1">
    <source>
        <dbReference type="UniProtKB" id="Q61699"/>
    </source>
</evidence>
<evidence type="ECO:0000250" key="2">
    <source>
        <dbReference type="UniProtKB" id="Q92598"/>
    </source>
</evidence>
<evidence type="ECO:0000256" key="3">
    <source>
        <dbReference type="SAM" id="MobiDB-lite"/>
    </source>
</evidence>
<evidence type="ECO:0000269" key="4">
    <source>
    </source>
</evidence>
<evidence type="ECO:0000305" key="5"/>
<gene>
    <name type="primary">HSPH1</name>
    <name type="synonym">HSP105</name>
    <name type="synonym">HSP110</name>
</gene>
<organism>
    <name type="scientific">Cricetulus griseus</name>
    <name type="common">Chinese hamster</name>
    <name type="synonym">Cricetulus barabensis griseus</name>
    <dbReference type="NCBI Taxonomy" id="10029"/>
    <lineage>
        <taxon>Eukaryota</taxon>
        <taxon>Metazoa</taxon>
        <taxon>Chordata</taxon>
        <taxon>Craniata</taxon>
        <taxon>Vertebrata</taxon>
        <taxon>Euteleostomi</taxon>
        <taxon>Mammalia</taxon>
        <taxon>Eutheria</taxon>
        <taxon>Euarchontoglires</taxon>
        <taxon>Glires</taxon>
        <taxon>Rodentia</taxon>
        <taxon>Myomorpha</taxon>
        <taxon>Muroidea</taxon>
        <taxon>Cricetidae</taxon>
        <taxon>Cricetinae</taxon>
        <taxon>Cricetulus</taxon>
    </lineage>
</organism>
<sequence>MSVVGLDVGSQSCYIAVARAGGIETIANEFSDRCTPSVISFGPKNRTIGVAAKNQQITHANNTVSSFKRFHGRAFSDPFIQKEKESLSYDLVPMKNGGVGIKVMYMDEEHLFSVEQITAMLLTKLKETAENNLKKPVTDCVISVPSFFTDAERRSVLDAAQIVGLNCLRLMNDMTAVALNYGIYKQDLPNADEKPQGSGVCGHGPSSFQVSACAFNKGKLKVLGTAFDPFLGGKNFDEKLVEHFCAEFKTKYKLDAKSKIRALLRLHQECEKLKKLMSSNSTDLPLNIECFMNDKDVSAKMNRSQFEELCAELLQKIEVPLHSLMEQTHLKTEDVSAIEIVGGATRIPAVKERIAKFFGKDVSTTLNADEAVARGCALQCAILSPAFKVREFSVTDAVPFPISLVWNHDSEETEGVHEVFSRNHAAPFSKVLTFLRRGPFELEAFYSDPQGVPYPEAKIGRFVVQNVSAQKDGEKSKVKVKVRVNTHGIFTISTASMVEKVPTEEDDGSSVEADMECPNQKPAESSDVDKNSQQDNSEAGTQPQVQTDGQQTSQSPPSPELPSEENKIPDADKANEKKVDQPPEAKKPKIKVVNVELPVEANLVWQLGRDLLNMYIETEGKMIMQDKLEKERNDAKNAVEECVYEFRDKLCGPYEKFICQQEHEKFLRLLTETEDWLYEEGEDQAKQAYIDKLEELMKMGNPVKVRFQEAEERPKVLEELGQRLQHYAKIAADFRSKDEKYNHIDESEMKKVEKSVNEVMEWMNNVMNAQAKRSLDQDPVVRTHEIRAKVKELNNVCEPVVNQPKPKIESPKLERTPNGPNLDKKEDLEGKDNFGAEAPHQNGECHPNEKGSVNMDLD</sequence>
<reference key="1">
    <citation type="journal article" date="1995" name="J. Biol. Chem.">
        <title>Identification of a major subfamily of large hsp70-like proteins through the cloning of the mammalian 110-kDa heat shock protein.</title>
        <authorList>
            <person name="Lee-Yoon D."/>
            <person name="Easton D."/>
            <person name="Murawski M."/>
            <person name="Burd R."/>
            <person name="Subjeck J.R."/>
        </authorList>
    </citation>
    <scope>NUCLEOTIDE SEQUENCE [MRNA]</scope>
</reference>
<reference key="2">
    <citation type="journal article" date="1997" name="J. Biol. Chem.">
        <title>Hsp110 protects heat-denatured proteins and confers cellular thermoresistance.</title>
        <authorList>
            <person name="Oh H.J."/>
            <person name="Chen X."/>
            <person name="Subjeck J.R."/>
        </authorList>
    </citation>
    <scope>FUNCTION</scope>
</reference>
<dbReference type="EMBL" id="Z47807">
    <property type="protein sequence ID" value="CAA87768.1"/>
    <property type="molecule type" value="mRNA"/>
</dbReference>
<dbReference type="PIR" id="A57513">
    <property type="entry name" value="A57513"/>
</dbReference>
<dbReference type="RefSeq" id="NP_001233649.1">
    <property type="nucleotide sequence ID" value="NM_001246720.1"/>
</dbReference>
<dbReference type="SMR" id="Q60446"/>
<dbReference type="PaxDb" id="10029-NP_001233649.1"/>
<dbReference type="GeneID" id="100689462"/>
<dbReference type="KEGG" id="cge:100689462"/>
<dbReference type="CTD" id="10808"/>
<dbReference type="eggNOG" id="KOG0103">
    <property type="taxonomic scope" value="Eukaryota"/>
</dbReference>
<dbReference type="OrthoDB" id="434160at2759"/>
<dbReference type="PRO" id="PR:Q60446"/>
<dbReference type="Proteomes" id="UP000694386">
    <property type="component" value="Unplaced"/>
</dbReference>
<dbReference type="Proteomes" id="UP001108280">
    <property type="component" value="Chromosome 4"/>
</dbReference>
<dbReference type="GO" id="GO:0005829">
    <property type="term" value="C:cytosol"/>
    <property type="evidence" value="ECO:0007669"/>
    <property type="project" value="TreeGrafter"/>
</dbReference>
<dbReference type="GO" id="GO:0005634">
    <property type="term" value="C:nucleus"/>
    <property type="evidence" value="ECO:0007669"/>
    <property type="project" value="TreeGrafter"/>
</dbReference>
<dbReference type="GO" id="GO:0000774">
    <property type="term" value="F:adenyl-nucleotide exchange factor activity"/>
    <property type="evidence" value="ECO:0000250"/>
    <property type="project" value="UniProtKB"/>
</dbReference>
<dbReference type="GO" id="GO:0005524">
    <property type="term" value="F:ATP binding"/>
    <property type="evidence" value="ECO:0007669"/>
    <property type="project" value="UniProtKB-KW"/>
</dbReference>
<dbReference type="GO" id="GO:0140662">
    <property type="term" value="F:ATP-dependent protein folding chaperone"/>
    <property type="evidence" value="ECO:0007669"/>
    <property type="project" value="InterPro"/>
</dbReference>
<dbReference type="GO" id="GO:0031249">
    <property type="term" value="F:denatured protein binding"/>
    <property type="evidence" value="ECO:0000314"/>
    <property type="project" value="FlyBase"/>
</dbReference>
<dbReference type="GO" id="GO:0034605">
    <property type="term" value="P:cellular response to heat"/>
    <property type="evidence" value="ECO:0000314"/>
    <property type="project" value="FlyBase"/>
</dbReference>
<dbReference type="CDD" id="cd11739">
    <property type="entry name" value="ASKHA_NBD_HSP70_HSPH1"/>
    <property type="match status" value="1"/>
</dbReference>
<dbReference type="FunFam" id="1.20.1270.10:FF:000002">
    <property type="entry name" value="Heat shock 70 kDa protein 4"/>
    <property type="match status" value="1"/>
</dbReference>
<dbReference type="FunFam" id="3.30.30.30:FF:000002">
    <property type="entry name" value="Heat shock 70 kDa protein 4"/>
    <property type="match status" value="1"/>
</dbReference>
<dbReference type="FunFam" id="3.30.420.40:FF:000171">
    <property type="entry name" value="Heat shock 70 kDa protein 4"/>
    <property type="match status" value="1"/>
</dbReference>
<dbReference type="FunFam" id="3.90.640.10:FF:000004">
    <property type="entry name" value="Heat shock 70 kDa protein 4"/>
    <property type="match status" value="1"/>
</dbReference>
<dbReference type="FunFam" id="3.30.420.40:FF:000243">
    <property type="entry name" value="Heat shock protein 105 kDa"/>
    <property type="match status" value="1"/>
</dbReference>
<dbReference type="FunFam" id="1.20.1270.10:FF:000012">
    <property type="entry name" value="Heat shock protein 105 kDa isoform 1"/>
    <property type="match status" value="1"/>
</dbReference>
<dbReference type="FunFam" id="2.60.34.10:FF:000007">
    <property type="entry name" value="Heat shock protein 105 kDa isoform 1"/>
    <property type="match status" value="1"/>
</dbReference>
<dbReference type="FunFam" id="3.30.420.40:FF:000495">
    <property type="entry name" value="Heat shock protein 4b"/>
    <property type="match status" value="1"/>
</dbReference>
<dbReference type="Gene3D" id="1.20.1270.10">
    <property type="match status" value="2"/>
</dbReference>
<dbReference type="Gene3D" id="3.30.30.30">
    <property type="match status" value="1"/>
</dbReference>
<dbReference type="Gene3D" id="3.30.420.40">
    <property type="match status" value="2"/>
</dbReference>
<dbReference type="Gene3D" id="3.90.640.10">
    <property type="entry name" value="Actin, Chain A, domain 4"/>
    <property type="match status" value="1"/>
</dbReference>
<dbReference type="Gene3D" id="2.60.34.10">
    <property type="entry name" value="Substrate Binding Domain Of DNAk, Chain A, domain 1"/>
    <property type="match status" value="1"/>
</dbReference>
<dbReference type="InterPro" id="IPR043129">
    <property type="entry name" value="ATPase_NBD"/>
</dbReference>
<dbReference type="InterPro" id="IPR018181">
    <property type="entry name" value="Heat_shock_70_CS"/>
</dbReference>
<dbReference type="InterPro" id="IPR029048">
    <property type="entry name" value="HSP70_C_sf"/>
</dbReference>
<dbReference type="InterPro" id="IPR029047">
    <property type="entry name" value="HSP70_peptide-bd_sf"/>
</dbReference>
<dbReference type="InterPro" id="IPR013126">
    <property type="entry name" value="Hsp_70_fam"/>
</dbReference>
<dbReference type="InterPro" id="IPR042053">
    <property type="entry name" value="HSPH1_NBD"/>
</dbReference>
<dbReference type="PANTHER" id="PTHR45639:SF2">
    <property type="entry name" value="HEAT SHOCK PROTEIN 105 KDA"/>
    <property type="match status" value="1"/>
</dbReference>
<dbReference type="PANTHER" id="PTHR45639">
    <property type="entry name" value="HSC70CB, ISOFORM G-RELATED"/>
    <property type="match status" value="1"/>
</dbReference>
<dbReference type="Pfam" id="PF00012">
    <property type="entry name" value="HSP70"/>
    <property type="match status" value="1"/>
</dbReference>
<dbReference type="PRINTS" id="PR00301">
    <property type="entry name" value="HEATSHOCK70"/>
</dbReference>
<dbReference type="SUPFAM" id="SSF53067">
    <property type="entry name" value="Actin-like ATPase domain"/>
    <property type="match status" value="2"/>
</dbReference>
<dbReference type="SUPFAM" id="SSF100934">
    <property type="entry name" value="Heat shock protein 70kD (HSP70), C-terminal subdomain"/>
    <property type="match status" value="2"/>
</dbReference>
<dbReference type="SUPFAM" id="SSF100920">
    <property type="entry name" value="Heat shock protein 70kD (HSP70), peptide-binding domain"/>
    <property type="match status" value="1"/>
</dbReference>
<dbReference type="PROSITE" id="PS01036">
    <property type="entry name" value="HSP70_3"/>
    <property type="match status" value="1"/>
</dbReference>